<name>ANKD_ASPTH</name>
<accession>A0A397HQN2</accession>
<gene>
    <name evidence="3" type="primary">ankD</name>
    <name type="ORF">CDV56_108975</name>
</gene>
<reference key="1">
    <citation type="journal article" date="2019" name="Microbiol. Resour. Announc.">
        <title>Draft Genome Sequence of Azole-Resistant Aspergillus thermomutatus (Neosartorya pseudofischeri) Strain HMR-AF-39, Isolated from a Human Nasal Septum Abscess Aspirate.</title>
        <authorList>
            <person name="Parent-Michaud M."/>
            <person name="Dufresne P.J."/>
            <person name="Fournier E."/>
            <person name="Martineau C."/>
            <person name="Moreira S."/>
            <person name="Perkins V."/>
            <person name="de Repentigny L."/>
            <person name="Dufresne S.F."/>
        </authorList>
    </citation>
    <scope>NUCLEOTIDE SEQUENCE [LARGE SCALE GENOMIC DNA]</scope>
    <source>
        <strain>HMR-AF-39/LSPQ-01276</strain>
    </source>
</reference>
<reference key="2">
    <citation type="journal article" date="2023" name="Nat. Chem. Biol.">
        <title>Genome mining for unknown-unknown natural products.</title>
        <authorList>
            <person name="Yee D.A."/>
            <person name="Niwa K."/>
            <person name="Perlatti B."/>
            <person name="Chen M."/>
            <person name="Li Y."/>
            <person name="Tang Y."/>
        </authorList>
    </citation>
    <scope>FUNCTION</scope>
    <scope>CATALYTIC ACTIVITY</scope>
    <scope>PATHWAY</scope>
</reference>
<sequence>MGELGPASAQHGSDSISFSGSYTQPLGAPQPPNEPHAISVSLPTWEAVTAVMAGADWAICQLQTSYPRFDIHKCVRELHDAVLARFKHPAHTVCRAFPSPEAAERFVSRLQREDPILSVHTARFHLPHDAVPELAKWAAFSVVLFNESLEEVAFEFWEWFGDGISSRHAEFCLTQFSFLNTGSDQPEYQTVGQDSHDLSAMNLPEWIDSSTKDKMDIKSRLASSATSADPALKPMGNDDVLLYATGMAAISAIARALARTSDDSGAVVYGWPYSGTPHCVQGCGFKRYTMYGHGSKADLDSLETLLVSETRFTVLFCEITSNPQLSTPDLHRIRDLADRFGFIVVCDDTLGTSVNVDILPYVDVIITSLTKIFSGAGNVMGGSLMINPNSGHYSTLRALLTTTYEDLYFPLDAKTIARNSSDFAARVHKCNKSALQIANLLNSHASVESVNYPTMVPTAPLYERYRRPDGGYGFLLSVIFREPESAVLFYDKLDVWKGPTVGTNFSISIPYSALAHAKEQDWAASHGVPKHIVRLSVGLEDYGDLSERVNRALREVELREKMG</sequence>
<keyword id="KW-0663">Pyridoxal phosphate</keyword>
<keyword id="KW-1185">Reference proteome</keyword>
<keyword id="KW-0808">Transferase</keyword>
<organism>
    <name type="scientific">Aspergillus thermomutatus</name>
    <name type="common">Neosartorya pseudofischeri</name>
    <dbReference type="NCBI Taxonomy" id="41047"/>
    <lineage>
        <taxon>Eukaryota</taxon>
        <taxon>Fungi</taxon>
        <taxon>Dikarya</taxon>
        <taxon>Ascomycota</taxon>
        <taxon>Pezizomycotina</taxon>
        <taxon>Eurotiomycetes</taxon>
        <taxon>Eurotiomycetidae</taxon>
        <taxon>Eurotiales</taxon>
        <taxon>Aspergillaceae</taxon>
        <taxon>Aspergillus</taxon>
        <taxon>Aspergillus subgen. Fumigati</taxon>
    </lineage>
</organism>
<protein>
    <recommendedName>
        <fullName evidence="3">Cystathionine gamma-synthase-like protein ankD</fullName>
        <ecNumber evidence="2">2.5.1.-</ecNumber>
    </recommendedName>
    <alternativeName>
        <fullName evidence="3">Ank biosynthesis cluster protein D</fullName>
    </alternativeName>
</protein>
<evidence type="ECO:0000256" key="1">
    <source>
        <dbReference type="SAM" id="MobiDB-lite"/>
    </source>
</evidence>
<evidence type="ECO:0000269" key="2">
    <source>
    </source>
</evidence>
<evidence type="ECO:0000303" key="3">
    <source>
    </source>
</evidence>
<evidence type="ECO:0000305" key="4"/>
<evidence type="ECO:0000305" key="5">
    <source>
    </source>
</evidence>
<dbReference type="EC" id="2.5.1.-" evidence="2"/>
<dbReference type="EMBL" id="NKHU02000029">
    <property type="protein sequence ID" value="RHZ63463.1"/>
    <property type="molecule type" value="Genomic_DNA"/>
</dbReference>
<dbReference type="SMR" id="A0A397HQN2"/>
<dbReference type="STRING" id="41047.A0A397HQN2"/>
<dbReference type="VEuPathDB" id="FungiDB:CDV56_108975"/>
<dbReference type="OrthoDB" id="10047078at2759"/>
<dbReference type="Proteomes" id="UP000215305">
    <property type="component" value="Unassembled WGS sequence"/>
</dbReference>
<dbReference type="GO" id="GO:0003962">
    <property type="term" value="F:cystathionine gamma-synthase activity"/>
    <property type="evidence" value="ECO:0007669"/>
    <property type="project" value="TreeGrafter"/>
</dbReference>
<dbReference type="GO" id="GO:0030170">
    <property type="term" value="F:pyridoxal phosphate binding"/>
    <property type="evidence" value="ECO:0007669"/>
    <property type="project" value="InterPro"/>
</dbReference>
<dbReference type="GO" id="GO:0019346">
    <property type="term" value="P:transsulfuration"/>
    <property type="evidence" value="ECO:0007669"/>
    <property type="project" value="InterPro"/>
</dbReference>
<dbReference type="Gene3D" id="3.90.1150.10">
    <property type="entry name" value="Aspartate Aminotransferase, domain 1"/>
    <property type="match status" value="1"/>
</dbReference>
<dbReference type="Gene3D" id="3.40.640.10">
    <property type="entry name" value="Type I PLP-dependent aspartate aminotransferase-like (Major domain)"/>
    <property type="match status" value="1"/>
</dbReference>
<dbReference type="InterPro" id="IPR000277">
    <property type="entry name" value="Cys/Met-Metab_PyrdxlP-dep_enz"/>
</dbReference>
<dbReference type="InterPro" id="IPR015424">
    <property type="entry name" value="PyrdxlP-dep_Trfase"/>
</dbReference>
<dbReference type="InterPro" id="IPR015421">
    <property type="entry name" value="PyrdxlP-dep_Trfase_major"/>
</dbReference>
<dbReference type="InterPro" id="IPR015422">
    <property type="entry name" value="PyrdxlP-dep_Trfase_small"/>
</dbReference>
<dbReference type="InterPro" id="IPR051750">
    <property type="entry name" value="Trans-sulfuration_enzymes"/>
</dbReference>
<dbReference type="PANTHER" id="PTHR42699">
    <property type="match status" value="1"/>
</dbReference>
<dbReference type="PANTHER" id="PTHR42699:SF1">
    <property type="entry name" value="CYSTATHIONINE GAMMA-SYNTHASE-RELATED"/>
    <property type="match status" value="1"/>
</dbReference>
<dbReference type="Pfam" id="PF01053">
    <property type="entry name" value="Cys_Met_Meta_PP"/>
    <property type="match status" value="1"/>
</dbReference>
<dbReference type="SUPFAM" id="SSF53383">
    <property type="entry name" value="PLP-dependent transferases"/>
    <property type="match status" value="1"/>
</dbReference>
<comment type="function">
    <text evidence="2">Cystathionine gamma-synthase-like protein; part of the ank cluster that mediates the biosynthesis of NK13650 C, a highly modified cyclo-arginine-tyrosine dipeptide (PubMed:36702957). AnkD catalyzes the attachment of L-homoserine moiety using O-acetyl-L-homoserine as co-substrate (PubMed:36702957). Within the pathway, the cyclodipeptide synthase ankA acts as the scaffold-generating enzyme and is responsible for formation of the cyclo-Arg-Tyr diketopiperazine (cRY) from L-Arg and L-Tyr. The ankA product cRY is desaturated by the cytochrome P450 monooxygenase ankB to yield a dehydro-cyclodipeptide intermediate. The FAD-dependent monooxygenase ankC then installs the m-OH, ankD catalyzes the attachment of L-homoserine, and ankE ligates citrate to the ankD product to yield NK13650 B. The O-methyltransferase ankF is responsible for methylation of the C-17 phenol group of NK13650 B to produce NK13650 D. Amidation of NK13650 D with L-Asp by ankG then leads to the production of NK13650 C, whereas amidation of NK13650 B produces NK13650 A (PubMed:36702957).</text>
</comment>
<comment type="catalytic activity">
    <reaction evidence="2">
        <text>cyclo(L-arginyl-(Z)-dehydro-3,4-dihydroxytyrosyl) + O-acetyl-L-homoserine = cyclo(L-arginyl-(Z)-dehydro-4-O-homoseryl-tyrosyl) + acetate + H(+)</text>
        <dbReference type="Rhea" id="RHEA:80251"/>
        <dbReference type="ChEBI" id="CHEBI:15378"/>
        <dbReference type="ChEBI" id="CHEBI:30089"/>
        <dbReference type="ChEBI" id="CHEBI:57716"/>
        <dbReference type="ChEBI" id="CHEBI:231272"/>
        <dbReference type="ChEBI" id="CHEBI:231316"/>
    </reaction>
    <physiologicalReaction direction="left-to-right" evidence="2">
        <dbReference type="Rhea" id="RHEA:80252"/>
    </physiologicalReaction>
</comment>
<comment type="cofactor">
    <cofactor evidence="5">
        <name>pyridoxal 5'-phosphate</name>
        <dbReference type="ChEBI" id="CHEBI:597326"/>
    </cofactor>
</comment>
<comment type="pathway">
    <text evidence="2">Secondary metabolite biosynthesis.</text>
</comment>
<comment type="similarity">
    <text evidence="4">Belongs to the trans-sulfuration enzymes family. MET7 subfamily.</text>
</comment>
<feature type="chain" id="PRO_0000460657" description="Cystathionine gamma-synthase-like protein ankD">
    <location>
        <begin position="1"/>
        <end position="563"/>
    </location>
</feature>
<feature type="region of interest" description="Disordered" evidence="1">
    <location>
        <begin position="1"/>
        <end position="37"/>
    </location>
</feature>
<feature type="compositionally biased region" description="Polar residues" evidence="1">
    <location>
        <begin position="10"/>
        <end position="24"/>
    </location>
</feature>
<proteinExistence type="evidence at protein level"/>